<accession>Q6EYJ8</accession>
<organism>
    <name type="scientific">Cornus mas</name>
    <name type="common">Cornelian cherry dogwood</name>
    <dbReference type="NCBI Taxonomy" id="4285"/>
    <lineage>
        <taxon>Eukaryota</taxon>
        <taxon>Viridiplantae</taxon>
        <taxon>Streptophyta</taxon>
        <taxon>Embryophyta</taxon>
        <taxon>Tracheophyta</taxon>
        <taxon>Spermatophyta</taxon>
        <taxon>Magnoliopsida</taxon>
        <taxon>eudicotyledons</taxon>
        <taxon>Gunneridae</taxon>
        <taxon>Pentapetalae</taxon>
        <taxon>asterids</taxon>
        <taxon>Cornales</taxon>
        <taxon>Cornaceae</taxon>
        <taxon>Cornus</taxon>
    </lineage>
</organism>
<sequence>METATLVAIFISGLLVSFTGYALYTAFGQPSQQLRDPFEEHGD</sequence>
<reference key="1">
    <citation type="submission" date="2002-07" db="EMBL/GenBank/DDBJ databases">
        <title>Parsing out signal and noise for seed-plant phylogenetic inference.</title>
        <authorList>
            <person name="Graham S.W."/>
            <person name="Rai H.S."/>
            <person name="Ikegami K."/>
            <person name="Reeves P.A."/>
            <person name="Olmstead R.G."/>
        </authorList>
    </citation>
    <scope>NUCLEOTIDE SEQUENCE [GENOMIC DNA]</scope>
</reference>
<comment type="function">
    <text evidence="1">May play a role in photosystem I and II biogenesis.</text>
</comment>
<comment type="subcellular location">
    <subcellularLocation>
        <location evidence="1">Plastid</location>
        <location evidence="1">Chloroplast thylakoid membrane</location>
        <topology evidence="1">Single-pass membrane protein</topology>
    </subcellularLocation>
</comment>
<comment type="similarity">
    <text evidence="1">Belongs to the PsbN family.</text>
</comment>
<comment type="caution">
    <text evidence="1">Originally thought to be a component of PSII; based on experiments in Synechocystis, N.tabacum and barley, and its absence from PSII in T.elongatus and T.vulcanus, this is probably not true.</text>
</comment>
<evidence type="ECO:0000255" key="1">
    <source>
        <dbReference type="HAMAP-Rule" id="MF_00293"/>
    </source>
</evidence>
<dbReference type="EMBL" id="AF528897">
    <property type="protein sequence ID" value="AAQ09375.1"/>
    <property type="molecule type" value="Genomic_DNA"/>
</dbReference>
<dbReference type="SMR" id="Q6EYJ8"/>
<dbReference type="GO" id="GO:0009535">
    <property type="term" value="C:chloroplast thylakoid membrane"/>
    <property type="evidence" value="ECO:0007669"/>
    <property type="project" value="UniProtKB-SubCell"/>
</dbReference>
<dbReference type="GO" id="GO:0015979">
    <property type="term" value="P:photosynthesis"/>
    <property type="evidence" value="ECO:0007669"/>
    <property type="project" value="InterPro"/>
</dbReference>
<dbReference type="HAMAP" id="MF_00293">
    <property type="entry name" value="PSII_PsbN"/>
    <property type="match status" value="1"/>
</dbReference>
<dbReference type="InterPro" id="IPR003398">
    <property type="entry name" value="PSII_PsbN"/>
</dbReference>
<dbReference type="PANTHER" id="PTHR35326">
    <property type="entry name" value="PROTEIN PSBN"/>
    <property type="match status" value="1"/>
</dbReference>
<dbReference type="PANTHER" id="PTHR35326:SF3">
    <property type="entry name" value="PROTEIN PSBN"/>
    <property type="match status" value="1"/>
</dbReference>
<dbReference type="Pfam" id="PF02468">
    <property type="entry name" value="PsbN"/>
    <property type="match status" value="1"/>
</dbReference>
<proteinExistence type="inferred from homology"/>
<geneLocation type="chloroplast"/>
<gene>
    <name evidence="1" type="primary">psbN</name>
</gene>
<protein>
    <recommendedName>
        <fullName evidence="1">Protein PsbN</fullName>
    </recommendedName>
</protein>
<feature type="chain" id="PRO_0000207888" description="Protein PsbN">
    <location>
        <begin position="1"/>
        <end position="43"/>
    </location>
</feature>
<feature type="transmembrane region" description="Helical" evidence="1">
    <location>
        <begin position="7"/>
        <end position="27"/>
    </location>
</feature>
<name>PSBN_CORMA</name>
<keyword id="KW-0150">Chloroplast</keyword>
<keyword id="KW-0472">Membrane</keyword>
<keyword id="KW-0934">Plastid</keyword>
<keyword id="KW-0793">Thylakoid</keyword>
<keyword id="KW-0812">Transmembrane</keyword>
<keyword id="KW-1133">Transmembrane helix</keyword>